<reference key="1">
    <citation type="journal article" date="2003" name="J. Bacteriol.">
        <title>Comparative analyses of the complete genome sequences of Pierce's disease and citrus variegated chlorosis strains of Xylella fastidiosa.</title>
        <authorList>
            <person name="Van Sluys M.A."/>
            <person name="de Oliveira M.C."/>
            <person name="Monteiro-Vitorello C.B."/>
            <person name="Miyaki C.Y."/>
            <person name="Furlan L.R."/>
            <person name="Camargo L.E.A."/>
            <person name="da Silva A.C.R."/>
            <person name="Moon D.H."/>
            <person name="Takita M.A."/>
            <person name="Lemos E.G.M."/>
            <person name="Machado M.A."/>
            <person name="Ferro M.I.T."/>
            <person name="da Silva F.R."/>
            <person name="Goldman M.H.S."/>
            <person name="Goldman G.H."/>
            <person name="Lemos M.V.F."/>
            <person name="El-Dorry H."/>
            <person name="Tsai S.M."/>
            <person name="Carrer H."/>
            <person name="Carraro D.M."/>
            <person name="de Oliveira R.C."/>
            <person name="Nunes L.R."/>
            <person name="Siqueira W.J."/>
            <person name="Coutinho L.L."/>
            <person name="Kimura E.T."/>
            <person name="Ferro E.S."/>
            <person name="Harakava R."/>
            <person name="Kuramae E.E."/>
            <person name="Marino C.L."/>
            <person name="Giglioti E."/>
            <person name="Abreu I.L."/>
            <person name="Alves L.M.C."/>
            <person name="do Amaral A.M."/>
            <person name="Baia G.S."/>
            <person name="Blanco S.R."/>
            <person name="Brito M.S."/>
            <person name="Cannavan F.S."/>
            <person name="Celestino A.V."/>
            <person name="da Cunha A.F."/>
            <person name="Fenille R.C."/>
            <person name="Ferro J.A."/>
            <person name="Formighieri E.F."/>
            <person name="Kishi L.T."/>
            <person name="Leoni S.G."/>
            <person name="Oliveira A.R."/>
            <person name="Rosa V.E. Jr."/>
            <person name="Sassaki F.T."/>
            <person name="Sena J.A.D."/>
            <person name="de Souza A.A."/>
            <person name="Truffi D."/>
            <person name="Tsukumo F."/>
            <person name="Yanai G.M."/>
            <person name="Zaros L.G."/>
            <person name="Civerolo E.L."/>
            <person name="Simpson A.J.G."/>
            <person name="Almeida N.F. Jr."/>
            <person name="Setubal J.C."/>
            <person name="Kitajima J.P."/>
        </authorList>
    </citation>
    <scope>NUCLEOTIDE SEQUENCE [LARGE SCALE GENOMIC DNA]</scope>
    <source>
        <strain>Temecula1 / ATCC 700964</strain>
    </source>
</reference>
<feature type="chain" id="PRO_0000100427" description="Phosphoribosylformylglycinamidine synthase">
    <location>
        <begin position="1"/>
        <end position="1322"/>
    </location>
</feature>
<feature type="domain" description="Glutamine amidotransferase type-1" evidence="1">
    <location>
        <begin position="1073"/>
        <end position="1322"/>
    </location>
</feature>
<feature type="active site" description="Nucleophile" evidence="1">
    <location>
        <position position="1166"/>
    </location>
</feature>
<feature type="active site" evidence="1">
    <location>
        <position position="1287"/>
    </location>
</feature>
<feature type="active site" evidence="1">
    <location>
        <position position="1289"/>
    </location>
</feature>
<feature type="binding site" evidence="1">
    <location>
        <begin position="300"/>
        <end position="311"/>
    </location>
    <ligand>
        <name>ATP</name>
        <dbReference type="ChEBI" id="CHEBI:30616"/>
    </ligand>
</feature>
<feature type="binding site" evidence="1">
    <location>
        <position position="702"/>
    </location>
    <ligand>
        <name>ATP</name>
        <dbReference type="ChEBI" id="CHEBI:30616"/>
    </ligand>
</feature>
<feature type="binding site" evidence="1">
    <location>
        <position position="703"/>
    </location>
    <ligand>
        <name>Mg(2+)</name>
        <dbReference type="ChEBI" id="CHEBI:18420"/>
    </ligand>
</feature>
<feature type="binding site" evidence="1">
    <location>
        <position position="742"/>
    </location>
    <ligand>
        <name>Mg(2+)</name>
        <dbReference type="ChEBI" id="CHEBI:18420"/>
    </ligand>
</feature>
<feature type="binding site" evidence="1">
    <location>
        <position position="746"/>
    </location>
    <ligand>
        <name>Mg(2+)</name>
        <dbReference type="ChEBI" id="CHEBI:18420"/>
    </ligand>
</feature>
<feature type="binding site" evidence="1">
    <location>
        <position position="915"/>
    </location>
    <ligand>
        <name>Mg(2+)</name>
        <dbReference type="ChEBI" id="CHEBI:18420"/>
    </ligand>
</feature>
<feature type="binding site" evidence="1">
    <location>
        <position position="917"/>
    </location>
    <ligand>
        <name>ATP</name>
        <dbReference type="ChEBI" id="CHEBI:30616"/>
    </ligand>
</feature>
<protein>
    <recommendedName>
        <fullName evidence="1">Phosphoribosylformylglycinamidine synthase</fullName>
        <shortName evidence="1">FGAM synthase</shortName>
        <shortName evidence="1">FGAMS</shortName>
        <ecNumber evidence="1">6.3.5.3</ecNumber>
    </recommendedName>
    <alternativeName>
        <fullName evidence="1">Formylglycinamide ribonucleotide amidotransferase</fullName>
        <shortName evidence="1">FGAR amidotransferase</shortName>
        <shortName evidence="1">FGAR-AT</shortName>
    </alternativeName>
</protein>
<proteinExistence type="inferred from homology"/>
<gene>
    <name evidence="1" type="primary">purL</name>
    <name type="ordered locus">PD_0650</name>
</gene>
<keyword id="KW-0067">ATP-binding</keyword>
<keyword id="KW-0963">Cytoplasm</keyword>
<keyword id="KW-0315">Glutamine amidotransferase</keyword>
<keyword id="KW-0436">Ligase</keyword>
<keyword id="KW-0460">Magnesium</keyword>
<keyword id="KW-0479">Metal-binding</keyword>
<keyword id="KW-0547">Nucleotide-binding</keyword>
<keyword id="KW-0658">Purine biosynthesis</keyword>
<keyword id="KW-1185">Reference proteome</keyword>
<sequence>MIVLKGASALSPFRLARFESRLQTTVPELRIVGAWHCYLIQIKSGHTLDMSALHRILQAESVSELPQKHVVSRYVMPRLGTHSPWSSKTTELLHGADQPIARIERGTRIDLLGWSANAATCPAIAKQLYDPMTQSLLESEDEVKTLFNVPEPRPLERIALIDLEHANTRLGLALTADEIDYLRTRYTELNRVPSDVELMMFAQANSEHCRHKIFNATWTIDDKEQPYSLFQMIKHTHQHTPQYTLSAYADNAAVIEGHPTTRYRPDPITGEYRHEAVLPGAFQIKVETHNHPTAIAPFPGASTGAGGEIRDEGATGRGGKPKAGLSGFSVSHLRIPTLPHPWETPRALNPRMASALDIMLEGPLGSAAFNNEFGRPNLLGYFRSFELSASKTLTRAYDKPIMLAGGLGAIDRIHIKKLRLQPGDVIIVLGGPAMLIGLGGGAASSVTSGTSTEALDFASVQRDNPEMQRRCQEVIDHCVALGTNNPIRSFHDVGAGGLSNAIPELLHDSEVGGVIDLAKIPSDDPSLSPLELWCNESQERYVLGISAPHLQAFAAICSRERCPFAAVGVATATEQLIVGYGVTLPAALHVTEQQTPQRANRTETSPTPNTLVSPVREAFAIDLPMDVLFGKAPKMHRNTAHPPPPQWPTLDSTQLDLHHAGLRVLAHPTVAAKNFLVTIGDRSIGGLTAREQMIGPWQLPLADCAITLAGFSSYAGEAFAIGERAPLALLNSAAAARMAVGEAITNLCAAPVESLSMVKLSANWMAAAEYPGEDALLYDAVKAIGIELCPALDISIPVGKDSLSMQSRWQGDGATHTCISPVSLVISAFTPVADARRQLTPLLHHQTNSELWLIALDGGKQRLGGSVLAQVHADSAALPAFGGECPDLDTPETLRAFFALMNDARNAGLLLAYHDRSDGGAFAALCEMAFASHLGLDITCDNRTEHLFPHLFNEELGAIVQVADEHRTAFADLVEHHGLTAYTQRIAHPTTAPSIRVMHNDQCLAQWTWETLFDAWWSVTHAIQRLRDNPECADEEREIARTFTAPGLKPTLSFDPAADVAMPFISTGIRPKVAILREQGINGHIEMALCFERAGFHSVDIHMNDLITGRVHLDEFVGLAACGGFSYGDVLGAGRGWATSILERTALRDQFAAFFTRTDRFALGVCNGCQMLSQLKSMIPGAEHWPRFVRNRSEQFEARTALLEVIQSPSIFLSGMAGSRLPVAVAHGEGYAMFDTPADQAAAHVALRYINGHGQAATHYPLNPNGSPNGITGLTTTDGRITILMPHPERTPRTINLSWCPNEWGEDAPWLRLFRNARAWVG</sequence>
<organism>
    <name type="scientific">Xylella fastidiosa (strain Temecula1 / ATCC 700964)</name>
    <dbReference type="NCBI Taxonomy" id="183190"/>
    <lineage>
        <taxon>Bacteria</taxon>
        <taxon>Pseudomonadati</taxon>
        <taxon>Pseudomonadota</taxon>
        <taxon>Gammaproteobacteria</taxon>
        <taxon>Lysobacterales</taxon>
        <taxon>Lysobacteraceae</taxon>
        <taxon>Xylella</taxon>
    </lineage>
</organism>
<accession>Q87DN2</accession>
<evidence type="ECO:0000255" key="1">
    <source>
        <dbReference type="HAMAP-Rule" id="MF_00419"/>
    </source>
</evidence>
<comment type="function">
    <text evidence="1">Phosphoribosylformylglycinamidine synthase involved in the purines biosynthetic pathway. Catalyzes the ATP-dependent conversion of formylglycinamide ribonucleotide (FGAR) and glutamine to yield formylglycinamidine ribonucleotide (FGAM) and glutamate.</text>
</comment>
<comment type="catalytic activity">
    <reaction evidence="1">
        <text>N(2)-formyl-N(1)-(5-phospho-beta-D-ribosyl)glycinamide + L-glutamine + ATP + H2O = 2-formamido-N(1)-(5-O-phospho-beta-D-ribosyl)acetamidine + L-glutamate + ADP + phosphate + H(+)</text>
        <dbReference type="Rhea" id="RHEA:17129"/>
        <dbReference type="ChEBI" id="CHEBI:15377"/>
        <dbReference type="ChEBI" id="CHEBI:15378"/>
        <dbReference type="ChEBI" id="CHEBI:29985"/>
        <dbReference type="ChEBI" id="CHEBI:30616"/>
        <dbReference type="ChEBI" id="CHEBI:43474"/>
        <dbReference type="ChEBI" id="CHEBI:58359"/>
        <dbReference type="ChEBI" id="CHEBI:147286"/>
        <dbReference type="ChEBI" id="CHEBI:147287"/>
        <dbReference type="ChEBI" id="CHEBI:456216"/>
        <dbReference type="EC" id="6.3.5.3"/>
    </reaction>
</comment>
<comment type="pathway">
    <text evidence="1">Purine metabolism; IMP biosynthesis via de novo pathway; 5-amino-1-(5-phospho-D-ribosyl)imidazole from N(2)-formyl-N(1)-(5-phospho-D-ribosyl)glycinamide: step 1/2.</text>
</comment>
<comment type="subunit">
    <text evidence="1">Monomer.</text>
</comment>
<comment type="subcellular location">
    <subcellularLocation>
        <location evidence="1">Cytoplasm</location>
    </subcellularLocation>
</comment>
<comment type="similarity">
    <text evidence="1">In the N-terminal section; belongs to the FGAMS family.</text>
</comment>
<name>PUR4_XYLFT</name>
<dbReference type="EC" id="6.3.5.3" evidence="1"/>
<dbReference type="EMBL" id="AE009442">
    <property type="protein sequence ID" value="AAO28521.1"/>
    <property type="molecule type" value="Genomic_DNA"/>
</dbReference>
<dbReference type="RefSeq" id="WP_011097732.1">
    <property type="nucleotide sequence ID" value="NC_004556.1"/>
</dbReference>
<dbReference type="SMR" id="Q87DN2"/>
<dbReference type="GeneID" id="93904427"/>
<dbReference type="KEGG" id="xft:PD_0650"/>
<dbReference type="HOGENOM" id="CLU_001031_0_2_6"/>
<dbReference type="UniPathway" id="UPA00074">
    <property type="reaction ID" value="UER00128"/>
</dbReference>
<dbReference type="Proteomes" id="UP000002516">
    <property type="component" value="Chromosome"/>
</dbReference>
<dbReference type="GO" id="GO:0005737">
    <property type="term" value="C:cytoplasm"/>
    <property type="evidence" value="ECO:0007669"/>
    <property type="project" value="UniProtKB-SubCell"/>
</dbReference>
<dbReference type="GO" id="GO:0005524">
    <property type="term" value="F:ATP binding"/>
    <property type="evidence" value="ECO:0007669"/>
    <property type="project" value="UniProtKB-UniRule"/>
</dbReference>
<dbReference type="GO" id="GO:0046872">
    <property type="term" value="F:metal ion binding"/>
    <property type="evidence" value="ECO:0007669"/>
    <property type="project" value="UniProtKB-KW"/>
</dbReference>
<dbReference type="GO" id="GO:0004642">
    <property type="term" value="F:phosphoribosylformylglycinamidine synthase activity"/>
    <property type="evidence" value="ECO:0007669"/>
    <property type="project" value="UniProtKB-UniRule"/>
</dbReference>
<dbReference type="GO" id="GO:0006189">
    <property type="term" value="P:'de novo' IMP biosynthetic process"/>
    <property type="evidence" value="ECO:0007669"/>
    <property type="project" value="UniProtKB-UniRule"/>
</dbReference>
<dbReference type="CDD" id="cd01740">
    <property type="entry name" value="GATase1_FGAR_AT"/>
    <property type="match status" value="1"/>
</dbReference>
<dbReference type="CDD" id="cd02203">
    <property type="entry name" value="PurL_repeat1"/>
    <property type="match status" value="1"/>
</dbReference>
<dbReference type="CDD" id="cd02204">
    <property type="entry name" value="PurL_repeat2"/>
    <property type="match status" value="1"/>
</dbReference>
<dbReference type="FunFam" id="3.30.1330.10:FF:000005">
    <property type="entry name" value="Phosphoribosylformylglycinamidine synthase"/>
    <property type="match status" value="1"/>
</dbReference>
<dbReference type="FunFam" id="3.40.50.880:FF:000008">
    <property type="entry name" value="Phosphoribosylformylglycinamidine synthase"/>
    <property type="match status" value="1"/>
</dbReference>
<dbReference type="FunFam" id="3.90.650.10:FF:000024">
    <property type="entry name" value="Phosphoribosylformylglycinamidine synthase"/>
    <property type="match status" value="1"/>
</dbReference>
<dbReference type="Gene3D" id="3.40.50.880">
    <property type="match status" value="1"/>
</dbReference>
<dbReference type="Gene3D" id="1.10.8.750">
    <property type="entry name" value="Phosphoribosylformylglycinamidine synthase, linker domain"/>
    <property type="match status" value="1"/>
</dbReference>
<dbReference type="Gene3D" id="3.90.650.10">
    <property type="entry name" value="PurM-like C-terminal domain"/>
    <property type="match status" value="2"/>
</dbReference>
<dbReference type="Gene3D" id="3.30.1330.10">
    <property type="entry name" value="PurM-like, N-terminal domain"/>
    <property type="match status" value="2"/>
</dbReference>
<dbReference type="HAMAP" id="MF_00419">
    <property type="entry name" value="PurL_1"/>
    <property type="match status" value="1"/>
</dbReference>
<dbReference type="InterPro" id="IPR029062">
    <property type="entry name" value="Class_I_gatase-like"/>
</dbReference>
<dbReference type="InterPro" id="IPR040707">
    <property type="entry name" value="FGAR-AT_N"/>
</dbReference>
<dbReference type="InterPro" id="IPR055181">
    <property type="entry name" value="FGAR-AT_PurM_N-like"/>
</dbReference>
<dbReference type="InterPro" id="IPR010073">
    <property type="entry name" value="PurL_large"/>
</dbReference>
<dbReference type="InterPro" id="IPR041609">
    <property type="entry name" value="PurL_linker"/>
</dbReference>
<dbReference type="InterPro" id="IPR010918">
    <property type="entry name" value="PurM-like_C_dom"/>
</dbReference>
<dbReference type="InterPro" id="IPR036676">
    <property type="entry name" value="PurM-like_C_sf"/>
</dbReference>
<dbReference type="InterPro" id="IPR036921">
    <property type="entry name" value="PurM-like_N_sf"/>
</dbReference>
<dbReference type="InterPro" id="IPR036604">
    <property type="entry name" value="PurS-like_sf"/>
</dbReference>
<dbReference type="NCBIfam" id="TIGR01735">
    <property type="entry name" value="FGAM_synt"/>
    <property type="match status" value="1"/>
</dbReference>
<dbReference type="NCBIfam" id="NF003672">
    <property type="entry name" value="PRK05297.1"/>
    <property type="match status" value="1"/>
</dbReference>
<dbReference type="PANTHER" id="PTHR10099">
    <property type="entry name" value="PHOSPHORIBOSYLFORMYLGLYCINAMIDINE SYNTHASE"/>
    <property type="match status" value="1"/>
</dbReference>
<dbReference type="PANTHER" id="PTHR10099:SF1">
    <property type="entry name" value="PHOSPHORIBOSYLFORMYLGLYCINAMIDINE SYNTHASE"/>
    <property type="match status" value="1"/>
</dbReference>
<dbReference type="Pfam" id="PF02769">
    <property type="entry name" value="AIRS_C"/>
    <property type="match status" value="2"/>
</dbReference>
<dbReference type="Pfam" id="PF18072">
    <property type="entry name" value="FGAR-AT_linker"/>
    <property type="match status" value="1"/>
</dbReference>
<dbReference type="Pfam" id="PF18076">
    <property type="entry name" value="FGAR-AT_N"/>
    <property type="match status" value="1"/>
</dbReference>
<dbReference type="Pfam" id="PF22689">
    <property type="entry name" value="FGAR-AT_PurM_N-like"/>
    <property type="match status" value="1"/>
</dbReference>
<dbReference type="Pfam" id="PF13507">
    <property type="entry name" value="GATase_5"/>
    <property type="match status" value="1"/>
</dbReference>
<dbReference type="SMART" id="SM01211">
    <property type="entry name" value="GATase_5"/>
    <property type="match status" value="1"/>
</dbReference>
<dbReference type="SUPFAM" id="SSF52317">
    <property type="entry name" value="Class I glutamine amidotransferase-like"/>
    <property type="match status" value="1"/>
</dbReference>
<dbReference type="SUPFAM" id="SSF109736">
    <property type="entry name" value="FGAM synthase PurL, linker domain"/>
    <property type="match status" value="1"/>
</dbReference>
<dbReference type="SUPFAM" id="SSF56042">
    <property type="entry name" value="PurM C-terminal domain-like"/>
    <property type="match status" value="2"/>
</dbReference>
<dbReference type="SUPFAM" id="SSF55326">
    <property type="entry name" value="PurM N-terminal domain-like"/>
    <property type="match status" value="2"/>
</dbReference>
<dbReference type="SUPFAM" id="SSF82697">
    <property type="entry name" value="PurS-like"/>
    <property type="match status" value="1"/>
</dbReference>
<dbReference type="PROSITE" id="PS51273">
    <property type="entry name" value="GATASE_TYPE_1"/>
    <property type="match status" value="1"/>
</dbReference>